<feature type="chain" id="PRO_0000255342" description="Glycerol-3-phosphate dehydrogenase [NAD(P)+]">
    <location>
        <begin position="1"/>
        <end position="333"/>
    </location>
</feature>
<feature type="active site" description="Proton acceptor" evidence="1">
    <location>
        <position position="191"/>
    </location>
</feature>
<feature type="binding site" evidence="1">
    <location>
        <position position="10"/>
    </location>
    <ligand>
        <name>NADPH</name>
        <dbReference type="ChEBI" id="CHEBI:57783"/>
    </ligand>
</feature>
<feature type="binding site" evidence="1">
    <location>
        <position position="11"/>
    </location>
    <ligand>
        <name>NADPH</name>
        <dbReference type="ChEBI" id="CHEBI:57783"/>
    </ligand>
</feature>
<feature type="binding site" evidence="1">
    <location>
        <position position="31"/>
    </location>
    <ligand>
        <name>NADPH</name>
        <dbReference type="ChEBI" id="CHEBI:57783"/>
    </ligand>
</feature>
<feature type="binding site" evidence="1">
    <location>
        <position position="32"/>
    </location>
    <ligand>
        <name>NADPH</name>
        <dbReference type="ChEBI" id="CHEBI:57783"/>
    </ligand>
</feature>
<feature type="binding site" evidence="1">
    <location>
        <position position="105"/>
    </location>
    <ligand>
        <name>NADPH</name>
        <dbReference type="ChEBI" id="CHEBI:57783"/>
    </ligand>
</feature>
<feature type="binding site" evidence="1">
    <location>
        <position position="105"/>
    </location>
    <ligand>
        <name>sn-glycerol 3-phosphate</name>
        <dbReference type="ChEBI" id="CHEBI:57597"/>
    </ligand>
</feature>
<feature type="binding site" evidence="1">
    <location>
        <position position="136"/>
    </location>
    <ligand>
        <name>sn-glycerol 3-phosphate</name>
        <dbReference type="ChEBI" id="CHEBI:57597"/>
    </ligand>
</feature>
<feature type="binding site" evidence="1">
    <location>
        <position position="138"/>
    </location>
    <ligand>
        <name>sn-glycerol 3-phosphate</name>
        <dbReference type="ChEBI" id="CHEBI:57597"/>
    </ligand>
</feature>
<feature type="binding site" evidence="1">
    <location>
        <position position="140"/>
    </location>
    <ligand>
        <name>NADPH</name>
        <dbReference type="ChEBI" id="CHEBI:57783"/>
    </ligand>
</feature>
<feature type="binding site" evidence="1">
    <location>
        <position position="191"/>
    </location>
    <ligand>
        <name>sn-glycerol 3-phosphate</name>
        <dbReference type="ChEBI" id="CHEBI:57597"/>
    </ligand>
</feature>
<feature type="binding site" evidence="1">
    <location>
        <position position="244"/>
    </location>
    <ligand>
        <name>sn-glycerol 3-phosphate</name>
        <dbReference type="ChEBI" id="CHEBI:57597"/>
    </ligand>
</feature>
<feature type="binding site" evidence="1">
    <location>
        <position position="254"/>
    </location>
    <ligand>
        <name>sn-glycerol 3-phosphate</name>
        <dbReference type="ChEBI" id="CHEBI:57597"/>
    </ligand>
</feature>
<feature type="binding site" evidence="1">
    <location>
        <position position="255"/>
    </location>
    <ligand>
        <name>NADPH</name>
        <dbReference type="ChEBI" id="CHEBI:57783"/>
    </ligand>
</feature>
<feature type="binding site" evidence="1">
    <location>
        <position position="255"/>
    </location>
    <ligand>
        <name>sn-glycerol 3-phosphate</name>
        <dbReference type="ChEBI" id="CHEBI:57597"/>
    </ligand>
</feature>
<feature type="binding site" evidence="1">
    <location>
        <position position="256"/>
    </location>
    <ligand>
        <name>sn-glycerol 3-phosphate</name>
        <dbReference type="ChEBI" id="CHEBI:57597"/>
    </ligand>
</feature>
<feature type="binding site" evidence="1">
    <location>
        <position position="279"/>
    </location>
    <ligand>
        <name>NADPH</name>
        <dbReference type="ChEBI" id="CHEBI:57783"/>
    </ligand>
</feature>
<feature type="binding site" evidence="1">
    <location>
        <position position="281"/>
    </location>
    <ligand>
        <name>NADPH</name>
        <dbReference type="ChEBI" id="CHEBI:57783"/>
    </ligand>
</feature>
<organism>
    <name type="scientific">Chlorobium luteolum (strain DSM 273 / BCRC 81028 / 2530)</name>
    <name type="common">Pelodictyon luteolum</name>
    <dbReference type="NCBI Taxonomy" id="319225"/>
    <lineage>
        <taxon>Bacteria</taxon>
        <taxon>Pseudomonadati</taxon>
        <taxon>Chlorobiota</taxon>
        <taxon>Chlorobiia</taxon>
        <taxon>Chlorobiales</taxon>
        <taxon>Chlorobiaceae</taxon>
        <taxon>Chlorobium/Pelodictyon group</taxon>
        <taxon>Pelodictyon</taxon>
    </lineage>
</organism>
<comment type="function">
    <text evidence="1">Catalyzes the reduction of the glycolytic intermediate dihydroxyacetone phosphate (DHAP) to sn-glycerol 3-phosphate (G3P), the key precursor for phospholipid synthesis.</text>
</comment>
<comment type="catalytic activity">
    <reaction evidence="1">
        <text>sn-glycerol 3-phosphate + NAD(+) = dihydroxyacetone phosphate + NADH + H(+)</text>
        <dbReference type="Rhea" id="RHEA:11092"/>
        <dbReference type="ChEBI" id="CHEBI:15378"/>
        <dbReference type="ChEBI" id="CHEBI:57540"/>
        <dbReference type="ChEBI" id="CHEBI:57597"/>
        <dbReference type="ChEBI" id="CHEBI:57642"/>
        <dbReference type="ChEBI" id="CHEBI:57945"/>
        <dbReference type="EC" id="1.1.1.94"/>
    </reaction>
    <physiologicalReaction direction="right-to-left" evidence="1">
        <dbReference type="Rhea" id="RHEA:11094"/>
    </physiologicalReaction>
</comment>
<comment type="catalytic activity">
    <reaction evidence="1">
        <text>sn-glycerol 3-phosphate + NADP(+) = dihydroxyacetone phosphate + NADPH + H(+)</text>
        <dbReference type="Rhea" id="RHEA:11096"/>
        <dbReference type="ChEBI" id="CHEBI:15378"/>
        <dbReference type="ChEBI" id="CHEBI:57597"/>
        <dbReference type="ChEBI" id="CHEBI:57642"/>
        <dbReference type="ChEBI" id="CHEBI:57783"/>
        <dbReference type="ChEBI" id="CHEBI:58349"/>
        <dbReference type="EC" id="1.1.1.94"/>
    </reaction>
    <physiologicalReaction direction="right-to-left" evidence="1">
        <dbReference type="Rhea" id="RHEA:11098"/>
    </physiologicalReaction>
</comment>
<comment type="pathway">
    <text evidence="1">Membrane lipid metabolism; glycerophospholipid metabolism.</text>
</comment>
<comment type="subcellular location">
    <subcellularLocation>
        <location evidence="1">Cytoplasm</location>
    </subcellularLocation>
</comment>
<comment type="similarity">
    <text evidence="1">Belongs to the NAD-dependent glycerol-3-phosphate dehydrogenase family.</text>
</comment>
<protein>
    <recommendedName>
        <fullName evidence="1">Glycerol-3-phosphate dehydrogenase [NAD(P)+]</fullName>
        <ecNumber evidence="1">1.1.1.94</ecNumber>
    </recommendedName>
    <alternativeName>
        <fullName evidence="1">NAD(P)(+)-dependent glycerol-3-phosphate dehydrogenase</fullName>
    </alternativeName>
    <alternativeName>
        <fullName evidence="1">NAD(P)H-dependent dihydroxyacetone-phosphate reductase</fullName>
    </alternativeName>
</protein>
<proteinExistence type="inferred from homology"/>
<evidence type="ECO:0000255" key="1">
    <source>
        <dbReference type="HAMAP-Rule" id="MF_00394"/>
    </source>
</evidence>
<gene>
    <name evidence="1" type="primary">gpsA</name>
    <name type="ordered locus">Plut_2057</name>
</gene>
<accession>Q3B182</accession>
<name>GPDA_CHLL3</name>
<sequence>MHIAVLGAGSWGTTLAVLLARKGHAVKLWAHRPEFARTLQAERENTRYLKGTLFPDSLEVVGDLDGCIAEAEMIVTAVPSQALRETARAFSSLPFQGKIIVNVAKGIEVGSGMRMTEVLMDELPGLQPGRVAALYGPSHAEEVAREQPTTVVASSPSMETAEAVQEVFHTSRFRVYVNTDIVGVEVAGSVKNIIAIAAGISDGIGFGDNAKAAIITRGMAEISRLALKLGGDPMTISGLSGIGDLVVTCLSRHSRNRFVGEELGRGRSLDDIITHMNMIAEGVLSSKAVYALSSSLGVEMPITQAVYEMLFEAKPVEQAILDLMTREPKPERD</sequence>
<reference key="1">
    <citation type="submission" date="2005-08" db="EMBL/GenBank/DDBJ databases">
        <title>Complete sequence of Pelodictyon luteolum DSM 273.</title>
        <authorList>
            <consortium name="US DOE Joint Genome Institute"/>
            <person name="Copeland A."/>
            <person name="Lucas S."/>
            <person name="Lapidus A."/>
            <person name="Barry K."/>
            <person name="Detter J.C."/>
            <person name="Glavina T."/>
            <person name="Hammon N."/>
            <person name="Israni S."/>
            <person name="Pitluck S."/>
            <person name="Bryant D."/>
            <person name="Schmutz J."/>
            <person name="Larimer F."/>
            <person name="Land M."/>
            <person name="Kyrpides N."/>
            <person name="Ivanova N."/>
            <person name="Richardson P."/>
        </authorList>
    </citation>
    <scope>NUCLEOTIDE SEQUENCE [LARGE SCALE GENOMIC DNA]</scope>
    <source>
        <strain>DSM 273 / BCRC 81028 / 2530</strain>
    </source>
</reference>
<keyword id="KW-0963">Cytoplasm</keyword>
<keyword id="KW-0444">Lipid biosynthesis</keyword>
<keyword id="KW-0443">Lipid metabolism</keyword>
<keyword id="KW-0520">NAD</keyword>
<keyword id="KW-0521">NADP</keyword>
<keyword id="KW-0547">Nucleotide-binding</keyword>
<keyword id="KW-0560">Oxidoreductase</keyword>
<keyword id="KW-0594">Phospholipid biosynthesis</keyword>
<keyword id="KW-1208">Phospholipid metabolism</keyword>
<keyword id="KW-1185">Reference proteome</keyword>
<dbReference type="EC" id="1.1.1.94" evidence="1"/>
<dbReference type="EMBL" id="CP000096">
    <property type="protein sequence ID" value="ABB24899.1"/>
    <property type="molecule type" value="Genomic_DNA"/>
</dbReference>
<dbReference type="RefSeq" id="WP_011358769.1">
    <property type="nucleotide sequence ID" value="NC_007512.1"/>
</dbReference>
<dbReference type="SMR" id="Q3B182"/>
<dbReference type="STRING" id="319225.Plut_2057"/>
<dbReference type="KEGG" id="plt:Plut_2057"/>
<dbReference type="eggNOG" id="COG0240">
    <property type="taxonomic scope" value="Bacteria"/>
</dbReference>
<dbReference type="HOGENOM" id="CLU_033449_0_2_10"/>
<dbReference type="OrthoDB" id="9812273at2"/>
<dbReference type="UniPathway" id="UPA00940"/>
<dbReference type="Proteomes" id="UP000002709">
    <property type="component" value="Chromosome"/>
</dbReference>
<dbReference type="GO" id="GO:0005829">
    <property type="term" value="C:cytosol"/>
    <property type="evidence" value="ECO:0007669"/>
    <property type="project" value="TreeGrafter"/>
</dbReference>
<dbReference type="GO" id="GO:0047952">
    <property type="term" value="F:glycerol-3-phosphate dehydrogenase [NAD(P)+] activity"/>
    <property type="evidence" value="ECO:0007669"/>
    <property type="project" value="UniProtKB-UniRule"/>
</dbReference>
<dbReference type="GO" id="GO:0051287">
    <property type="term" value="F:NAD binding"/>
    <property type="evidence" value="ECO:0007669"/>
    <property type="project" value="InterPro"/>
</dbReference>
<dbReference type="GO" id="GO:0005975">
    <property type="term" value="P:carbohydrate metabolic process"/>
    <property type="evidence" value="ECO:0007669"/>
    <property type="project" value="InterPro"/>
</dbReference>
<dbReference type="GO" id="GO:0046167">
    <property type="term" value="P:glycerol-3-phosphate biosynthetic process"/>
    <property type="evidence" value="ECO:0007669"/>
    <property type="project" value="UniProtKB-UniRule"/>
</dbReference>
<dbReference type="GO" id="GO:0046168">
    <property type="term" value="P:glycerol-3-phosphate catabolic process"/>
    <property type="evidence" value="ECO:0007669"/>
    <property type="project" value="InterPro"/>
</dbReference>
<dbReference type="GO" id="GO:0006650">
    <property type="term" value="P:glycerophospholipid metabolic process"/>
    <property type="evidence" value="ECO:0007669"/>
    <property type="project" value="UniProtKB-UniRule"/>
</dbReference>
<dbReference type="GO" id="GO:0008654">
    <property type="term" value="P:phospholipid biosynthetic process"/>
    <property type="evidence" value="ECO:0007669"/>
    <property type="project" value="UniProtKB-KW"/>
</dbReference>
<dbReference type="FunFam" id="1.10.1040.10:FF:000001">
    <property type="entry name" value="Glycerol-3-phosphate dehydrogenase [NAD(P)+]"/>
    <property type="match status" value="1"/>
</dbReference>
<dbReference type="FunFam" id="3.40.50.720:FF:000019">
    <property type="entry name" value="Glycerol-3-phosphate dehydrogenase [NAD(P)+]"/>
    <property type="match status" value="1"/>
</dbReference>
<dbReference type="Gene3D" id="1.10.1040.10">
    <property type="entry name" value="N-(1-d-carboxylethyl)-l-norvaline Dehydrogenase, domain 2"/>
    <property type="match status" value="1"/>
</dbReference>
<dbReference type="Gene3D" id="3.40.50.720">
    <property type="entry name" value="NAD(P)-binding Rossmann-like Domain"/>
    <property type="match status" value="1"/>
</dbReference>
<dbReference type="HAMAP" id="MF_00394">
    <property type="entry name" value="NAD_Glyc3P_dehydrog"/>
    <property type="match status" value="1"/>
</dbReference>
<dbReference type="InterPro" id="IPR008927">
    <property type="entry name" value="6-PGluconate_DH-like_C_sf"/>
</dbReference>
<dbReference type="InterPro" id="IPR013328">
    <property type="entry name" value="6PGD_dom2"/>
</dbReference>
<dbReference type="InterPro" id="IPR006168">
    <property type="entry name" value="G3P_DH_NAD-dep"/>
</dbReference>
<dbReference type="InterPro" id="IPR006109">
    <property type="entry name" value="G3P_DH_NAD-dep_C"/>
</dbReference>
<dbReference type="InterPro" id="IPR011128">
    <property type="entry name" value="G3P_DH_NAD-dep_N"/>
</dbReference>
<dbReference type="InterPro" id="IPR036291">
    <property type="entry name" value="NAD(P)-bd_dom_sf"/>
</dbReference>
<dbReference type="NCBIfam" id="NF000940">
    <property type="entry name" value="PRK00094.1-2"/>
    <property type="match status" value="1"/>
</dbReference>
<dbReference type="NCBIfam" id="NF000941">
    <property type="entry name" value="PRK00094.1-3"/>
    <property type="match status" value="1"/>
</dbReference>
<dbReference type="NCBIfam" id="NF000942">
    <property type="entry name" value="PRK00094.1-4"/>
    <property type="match status" value="1"/>
</dbReference>
<dbReference type="PANTHER" id="PTHR11728">
    <property type="entry name" value="GLYCEROL-3-PHOSPHATE DEHYDROGENASE"/>
    <property type="match status" value="1"/>
</dbReference>
<dbReference type="PANTHER" id="PTHR11728:SF1">
    <property type="entry name" value="GLYCEROL-3-PHOSPHATE DEHYDROGENASE [NAD(+)] 2, CHLOROPLASTIC"/>
    <property type="match status" value="1"/>
</dbReference>
<dbReference type="Pfam" id="PF07479">
    <property type="entry name" value="NAD_Gly3P_dh_C"/>
    <property type="match status" value="1"/>
</dbReference>
<dbReference type="Pfam" id="PF01210">
    <property type="entry name" value="NAD_Gly3P_dh_N"/>
    <property type="match status" value="1"/>
</dbReference>
<dbReference type="PIRSF" id="PIRSF000114">
    <property type="entry name" value="Glycerol-3-P_dh"/>
    <property type="match status" value="1"/>
</dbReference>
<dbReference type="PRINTS" id="PR00077">
    <property type="entry name" value="GPDHDRGNASE"/>
</dbReference>
<dbReference type="SUPFAM" id="SSF48179">
    <property type="entry name" value="6-phosphogluconate dehydrogenase C-terminal domain-like"/>
    <property type="match status" value="1"/>
</dbReference>
<dbReference type="SUPFAM" id="SSF51735">
    <property type="entry name" value="NAD(P)-binding Rossmann-fold domains"/>
    <property type="match status" value="1"/>
</dbReference>
<dbReference type="PROSITE" id="PS00957">
    <property type="entry name" value="NAD_G3PDH"/>
    <property type="match status" value="1"/>
</dbReference>